<accession>Q05068</accession>
<keyword id="KW-0028">Amino-acid biosynthesis</keyword>
<keyword id="KW-0963">Cytoplasm</keyword>
<keyword id="KW-0368">Histidine biosynthesis</keyword>
<keyword id="KW-0456">Lyase</keyword>
<keyword id="KW-1185">Reference proteome</keyword>
<dbReference type="EC" id="4.2.1.19" evidence="1"/>
<dbReference type="EMBL" id="L10036">
    <property type="protein sequence ID" value="AAD04185.1"/>
    <property type="molecule type" value="Genomic_DNA"/>
</dbReference>
<dbReference type="EMBL" id="BA000019">
    <property type="protein sequence ID" value="BAB76089.1"/>
    <property type="molecule type" value="Genomic_DNA"/>
</dbReference>
<dbReference type="PIR" id="AF2354">
    <property type="entry name" value="AF2354"/>
</dbReference>
<dbReference type="RefSeq" id="WP_010998527.1">
    <property type="nucleotide sequence ID" value="NZ_RSCN01000051.1"/>
</dbReference>
<dbReference type="SMR" id="Q05068"/>
<dbReference type="STRING" id="103690.gene:10496439"/>
<dbReference type="KEGG" id="ana:all4390"/>
<dbReference type="eggNOG" id="COG0131">
    <property type="taxonomic scope" value="Bacteria"/>
</dbReference>
<dbReference type="OrthoDB" id="9790411at2"/>
<dbReference type="UniPathway" id="UPA00031">
    <property type="reaction ID" value="UER00011"/>
</dbReference>
<dbReference type="Proteomes" id="UP000002483">
    <property type="component" value="Chromosome"/>
</dbReference>
<dbReference type="GO" id="GO:0005737">
    <property type="term" value="C:cytoplasm"/>
    <property type="evidence" value="ECO:0007669"/>
    <property type="project" value="UniProtKB-SubCell"/>
</dbReference>
<dbReference type="GO" id="GO:0004424">
    <property type="term" value="F:imidazoleglycerol-phosphate dehydratase activity"/>
    <property type="evidence" value="ECO:0007669"/>
    <property type="project" value="UniProtKB-UniRule"/>
</dbReference>
<dbReference type="GO" id="GO:0000105">
    <property type="term" value="P:L-histidine biosynthetic process"/>
    <property type="evidence" value="ECO:0007669"/>
    <property type="project" value="UniProtKB-UniRule"/>
</dbReference>
<dbReference type="CDD" id="cd07914">
    <property type="entry name" value="IGPD"/>
    <property type="match status" value="1"/>
</dbReference>
<dbReference type="FunFam" id="3.30.230.40:FF:000002">
    <property type="entry name" value="Imidazoleglycerol-phosphate dehydratase"/>
    <property type="match status" value="1"/>
</dbReference>
<dbReference type="FunFam" id="3.30.230.40:FF:000003">
    <property type="entry name" value="Imidazoleglycerol-phosphate dehydratase HisB"/>
    <property type="match status" value="1"/>
</dbReference>
<dbReference type="Gene3D" id="3.30.230.40">
    <property type="entry name" value="Imidazole glycerol phosphate dehydratase, domain 1"/>
    <property type="match status" value="2"/>
</dbReference>
<dbReference type="HAMAP" id="MF_00076">
    <property type="entry name" value="HisB"/>
    <property type="match status" value="1"/>
</dbReference>
<dbReference type="InterPro" id="IPR038494">
    <property type="entry name" value="IGPD_sf"/>
</dbReference>
<dbReference type="InterPro" id="IPR000807">
    <property type="entry name" value="ImidazoleglycerolP_deHydtase"/>
</dbReference>
<dbReference type="InterPro" id="IPR020565">
    <property type="entry name" value="ImidazoleglycerP_deHydtase_CS"/>
</dbReference>
<dbReference type="InterPro" id="IPR020568">
    <property type="entry name" value="Ribosomal_Su5_D2-typ_SF"/>
</dbReference>
<dbReference type="NCBIfam" id="NF002106">
    <property type="entry name" value="PRK00951.1-1"/>
    <property type="match status" value="1"/>
</dbReference>
<dbReference type="NCBIfam" id="NF002108">
    <property type="entry name" value="PRK00951.1-3"/>
    <property type="match status" value="1"/>
</dbReference>
<dbReference type="NCBIfam" id="NF002111">
    <property type="entry name" value="PRK00951.2-1"/>
    <property type="match status" value="1"/>
</dbReference>
<dbReference type="NCBIfam" id="NF002114">
    <property type="entry name" value="PRK00951.2-4"/>
    <property type="match status" value="1"/>
</dbReference>
<dbReference type="PANTHER" id="PTHR23133:SF2">
    <property type="entry name" value="IMIDAZOLEGLYCEROL-PHOSPHATE DEHYDRATASE"/>
    <property type="match status" value="1"/>
</dbReference>
<dbReference type="PANTHER" id="PTHR23133">
    <property type="entry name" value="IMIDAZOLEGLYCEROL-PHOSPHATE DEHYDRATASE HIS7"/>
    <property type="match status" value="1"/>
</dbReference>
<dbReference type="Pfam" id="PF00475">
    <property type="entry name" value="IGPD"/>
    <property type="match status" value="1"/>
</dbReference>
<dbReference type="SUPFAM" id="SSF54211">
    <property type="entry name" value="Ribosomal protein S5 domain 2-like"/>
    <property type="match status" value="2"/>
</dbReference>
<dbReference type="PROSITE" id="PS00954">
    <property type="entry name" value="IGP_DEHYDRATASE_1"/>
    <property type="match status" value="1"/>
</dbReference>
<dbReference type="PROSITE" id="PS00955">
    <property type="entry name" value="IGP_DEHYDRATASE_2"/>
    <property type="match status" value="1"/>
</dbReference>
<organism>
    <name type="scientific">Nostoc sp. (strain PCC 7120 / SAG 25.82 / UTEX 2576)</name>
    <dbReference type="NCBI Taxonomy" id="103690"/>
    <lineage>
        <taxon>Bacteria</taxon>
        <taxon>Bacillati</taxon>
        <taxon>Cyanobacteriota</taxon>
        <taxon>Cyanophyceae</taxon>
        <taxon>Nostocales</taxon>
        <taxon>Nostocaceae</taxon>
        <taxon>Nostoc</taxon>
    </lineage>
</organism>
<comment type="catalytic activity">
    <reaction evidence="1">
        <text>D-erythro-1-(imidazol-4-yl)glycerol 3-phosphate = 3-(imidazol-4-yl)-2-oxopropyl phosphate + H2O</text>
        <dbReference type="Rhea" id="RHEA:11040"/>
        <dbReference type="ChEBI" id="CHEBI:15377"/>
        <dbReference type="ChEBI" id="CHEBI:57766"/>
        <dbReference type="ChEBI" id="CHEBI:58278"/>
        <dbReference type="EC" id="4.2.1.19"/>
    </reaction>
</comment>
<comment type="pathway">
    <text evidence="1">Amino-acid biosynthesis; L-histidine biosynthesis; L-histidine from 5-phospho-alpha-D-ribose 1-diphosphate: step 6/9.</text>
</comment>
<comment type="subcellular location">
    <subcellularLocation>
        <location evidence="1">Cytoplasm</location>
    </subcellularLocation>
</comment>
<comment type="similarity">
    <text evidence="1">Belongs to the imidazoleglycerol-phosphate dehydratase family.</text>
</comment>
<evidence type="ECO:0000255" key="1">
    <source>
        <dbReference type="HAMAP-Rule" id="MF_00076"/>
    </source>
</evidence>
<gene>
    <name evidence="1" type="primary">hisB</name>
    <name type="ordered locus">all4390</name>
</gene>
<reference key="1">
    <citation type="journal article" date="1993" name="J. Bacteriol.">
        <title>Anabaena sp. strain PCC 7120 bifA gene encoding a sequence-specific DNA-binding protein cloned by in vivo transcriptional interference selection.</title>
        <authorList>
            <person name="Wei T.-F."/>
            <person name="Ramasubramanian T.S."/>
            <person name="Pu F."/>
            <person name="Golden J.W."/>
        </authorList>
    </citation>
    <scope>NUCLEOTIDE SEQUENCE [GENOMIC DNA]</scope>
</reference>
<reference key="2">
    <citation type="journal article" date="2001" name="DNA Res.">
        <title>Complete genomic sequence of the filamentous nitrogen-fixing cyanobacterium Anabaena sp. strain PCC 7120.</title>
        <authorList>
            <person name="Kaneko T."/>
            <person name="Nakamura Y."/>
            <person name="Wolk C.P."/>
            <person name="Kuritz T."/>
            <person name="Sasamoto S."/>
            <person name="Watanabe A."/>
            <person name="Iriguchi M."/>
            <person name="Ishikawa A."/>
            <person name="Kawashima K."/>
            <person name="Kimura T."/>
            <person name="Kishida Y."/>
            <person name="Kohara M."/>
            <person name="Matsumoto M."/>
            <person name="Matsuno A."/>
            <person name="Muraki A."/>
            <person name="Nakazaki N."/>
            <person name="Shimpo S."/>
            <person name="Sugimoto M."/>
            <person name="Takazawa M."/>
            <person name="Yamada M."/>
            <person name="Yasuda M."/>
            <person name="Tabata S."/>
        </authorList>
    </citation>
    <scope>NUCLEOTIDE SEQUENCE [LARGE SCALE GENOMIC DNA]</scope>
    <source>
        <strain>PCC 7120 / SAG 25.82 / UTEX 2576</strain>
    </source>
</reference>
<feature type="chain" id="PRO_0000158099" description="Imidazoleglycerol-phosphate dehydratase">
    <location>
        <begin position="1"/>
        <end position="209"/>
    </location>
</feature>
<name>HIS7_NOSS1</name>
<sequence length="209" mass="22890">MQISDYPQLNLSSVPRIASVHRITGETNVQVTVNLDGTGICKAATGIPFLDHMLHQISSHGLIDLDVQAKGDWEIDDHHTNEDVGITLGQALAKALGDRKGIVRFGNFLAPLDEALVQVALDFSGRPHLSYGLQIPTERVGTYDTQLVREFFVALVNHSQMTLHIRQLDGINSHHIIEATFKAFARAARMAIEVDPRRAGTIPSSKGVL</sequence>
<protein>
    <recommendedName>
        <fullName evidence="1">Imidazoleglycerol-phosphate dehydratase</fullName>
        <shortName evidence="1">IGPD</shortName>
        <ecNumber evidence="1">4.2.1.19</ecNumber>
    </recommendedName>
</protein>
<proteinExistence type="inferred from homology"/>